<protein>
    <recommendedName>
        <fullName evidence="1">2-oxoadipate dioxygenase/decarboxylase</fullName>
        <ecNumber evidence="1">1.13.11.93</ecNumber>
    </recommendedName>
    <alternativeName>
        <fullName evidence="1">2-hydroxyglutarate synthase</fullName>
    </alternativeName>
</protein>
<name>HGLS_SHIFL</name>
<comment type="function">
    <text evidence="1">Catalyzes the decarboxylation and hydroxylation of 2-oxoadipate (2OA) to form D-2-hydroxyglutarate (D-2-HGA).</text>
</comment>
<comment type="catalytic activity">
    <reaction evidence="1">
        <text>2-oxoadipate + O2 = (R)-2-hydroxyglutarate + CO2</text>
        <dbReference type="Rhea" id="RHEA:71787"/>
        <dbReference type="ChEBI" id="CHEBI:15379"/>
        <dbReference type="ChEBI" id="CHEBI:15801"/>
        <dbReference type="ChEBI" id="CHEBI:16526"/>
        <dbReference type="ChEBI" id="CHEBI:57499"/>
        <dbReference type="EC" id="1.13.11.93"/>
    </reaction>
</comment>
<comment type="cofactor">
    <cofactor evidence="1">
        <name>Fe(2+)</name>
        <dbReference type="ChEBI" id="CHEBI:29033"/>
    </cofactor>
</comment>
<comment type="similarity">
    <text evidence="3">Belongs to the 2-oxoadipate dioxygenase/decarboxylase family.</text>
</comment>
<gene>
    <name evidence="2" type="primary">ydcJ</name>
    <name evidence="5" type="ordered locus">SF1787</name>
</gene>
<proteinExistence type="evidence at protein level"/>
<reference key="1">
    <citation type="journal article" date="2002" name="Nucleic Acids Res.">
        <title>Genome sequence of Shigella flexneri 2a: insights into pathogenicity through comparison with genomes of Escherichia coli K12 and O157.</title>
        <authorList>
            <person name="Jin Q."/>
            <person name="Yuan Z."/>
            <person name="Xu J."/>
            <person name="Wang Y."/>
            <person name="Shen Y."/>
            <person name="Lu W."/>
            <person name="Wang J."/>
            <person name="Liu H."/>
            <person name="Yang J."/>
            <person name="Yang F."/>
            <person name="Zhang X."/>
            <person name="Zhang J."/>
            <person name="Yang G."/>
            <person name="Wu H."/>
            <person name="Qu D."/>
            <person name="Dong J."/>
            <person name="Sun L."/>
            <person name="Xue Y."/>
            <person name="Zhao A."/>
            <person name="Gao Y."/>
            <person name="Zhu J."/>
            <person name="Kan B."/>
            <person name="Ding K."/>
            <person name="Chen S."/>
            <person name="Cheng H."/>
            <person name="Yao Z."/>
            <person name="He B."/>
            <person name="Chen R."/>
            <person name="Ma D."/>
            <person name="Qiang B."/>
            <person name="Wen Y."/>
            <person name="Hou Y."/>
            <person name="Yu J."/>
        </authorList>
    </citation>
    <scope>NUCLEOTIDE SEQUENCE [LARGE SCALE GENOMIC DNA]</scope>
    <source>
        <strain>301 / Serotype 2a</strain>
    </source>
</reference>
<reference evidence="6" key="2">
    <citation type="submission" date="2007-10" db="PDB data bank">
        <title>Crystal structure of uncharacterized protein YdcJ (SF1787) from Shigella flexneri which includes domain DUF1338.</title>
        <authorList>
            <consortium name="Northeast structural genomics consortium (NESG)"/>
        </authorList>
    </citation>
    <scope>X-RAY CRYSTALLOGRAPHY (2.60 ANGSTROMS) IN COMPLEX WITH ZN(2+)</scope>
</reference>
<sequence>MANSITADEIREQFSQAMSAMYQQEVPQYGTLLELVADVNLAVLENNPQLHEKMVNADELARLNVERHGAIRVGTAQELATLRRMFAIMGMYPVSYYDLSQAGVPVHSTAFRPIDDASLARNPFRVFTSLLRLELIENEILRQKAAEILRQRDIFTPRCRQLLEEYEQQGGFNETQAQEFVQEALETFRWHQLATVDEETYRALHNEHRLIADVVCFPGCHINHLTPRTLDIDRVQSMMPECGIEPKILIEGPPRREVPILLRQTSFKALEETVLFAGQKQGTHTARFGEIEQRGVALTPKGRQLYDDLLRNAGTGQDNLTHQMHLQETFRTFPDSEFLMRQQGLAWFRYRLTPSGEAHRQAIHPGDDPQPLIERGWVVAQPITYEDFLPVSAAGIFQSNLGNETQTRSHGNASREAFEQALGCPVLDEFQLYQEAEERSKRRCGLL</sequence>
<keyword id="KW-0002">3D-structure</keyword>
<keyword id="KW-0223">Dioxygenase</keyword>
<keyword id="KW-0408">Iron</keyword>
<keyword id="KW-0479">Metal-binding</keyword>
<keyword id="KW-0560">Oxidoreductase</keyword>
<keyword id="KW-1185">Reference proteome</keyword>
<organism>
    <name type="scientific">Shigella flexneri</name>
    <dbReference type="NCBI Taxonomy" id="623"/>
    <lineage>
        <taxon>Bacteria</taxon>
        <taxon>Pseudomonadati</taxon>
        <taxon>Pseudomonadota</taxon>
        <taxon>Gammaproteobacteria</taxon>
        <taxon>Enterobacterales</taxon>
        <taxon>Enterobacteriaceae</taxon>
        <taxon>Shigella</taxon>
    </lineage>
</organism>
<feature type="chain" id="PRO_0000457783" description="2-oxoadipate dioxygenase/decarboxylase">
    <location>
        <begin position="1"/>
        <end position="447"/>
    </location>
</feature>
<feature type="binding site" evidence="1">
    <location>
        <position position="68"/>
    </location>
    <ligand>
        <name>2-oxoadipate</name>
        <dbReference type="ChEBI" id="CHEBI:57499"/>
    </ligand>
</feature>
<feature type="binding site" evidence="4 6">
    <location>
        <position position="68"/>
    </location>
    <ligand>
        <name>Fe(2+)</name>
        <dbReference type="ChEBI" id="CHEBI:29033"/>
    </ligand>
</feature>
<feature type="binding site" evidence="1">
    <location>
        <position position="72"/>
    </location>
    <ligand>
        <name>2-oxoadipate</name>
        <dbReference type="ChEBI" id="CHEBI:57499"/>
    </ligand>
</feature>
<feature type="binding site" evidence="1">
    <location>
        <position position="224"/>
    </location>
    <ligand>
        <name>2-oxoadipate</name>
        <dbReference type="ChEBI" id="CHEBI:57499"/>
    </ligand>
</feature>
<feature type="binding site" evidence="4 6">
    <location>
        <position position="224"/>
    </location>
    <ligand>
        <name>Fe(2+)</name>
        <dbReference type="ChEBI" id="CHEBI:29033"/>
    </ligand>
</feature>
<feature type="binding site" evidence="4 6">
    <location>
        <position position="290"/>
    </location>
    <ligand>
        <name>Fe(2+)</name>
        <dbReference type="ChEBI" id="CHEBI:29033"/>
    </ligand>
</feature>
<feature type="binding site" evidence="1">
    <location>
        <position position="391"/>
    </location>
    <ligand>
        <name>2-oxoadipate</name>
        <dbReference type="ChEBI" id="CHEBI:57499"/>
    </ligand>
</feature>
<feature type="site" description="Important for substrate specificity" evidence="1">
    <location>
        <position position="72"/>
    </location>
</feature>
<feature type="helix" evidence="7">
    <location>
        <begin position="7"/>
        <end position="25"/>
    </location>
</feature>
<feature type="helix" evidence="7">
    <location>
        <begin position="28"/>
        <end position="45"/>
    </location>
</feature>
<feature type="helix" evidence="7">
    <location>
        <begin position="48"/>
        <end position="56"/>
    </location>
</feature>
<feature type="helix" evidence="7">
    <location>
        <begin position="62"/>
        <end position="64"/>
    </location>
</feature>
<feature type="strand" evidence="7">
    <location>
        <begin position="67"/>
        <end position="74"/>
    </location>
</feature>
<feature type="helix" evidence="7">
    <location>
        <begin position="76"/>
        <end position="87"/>
    </location>
</feature>
<feature type="turn" evidence="7">
    <location>
        <begin position="88"/>
        <end position="90"/>
    </location>
</feature>
<feature type="strand" evidence="7">
    <location>
        <begin position="92"/>
        <end position="97"/>
    </location>
</feature>
<feature type="helix" evidence="7">
    <location>
        <begin position="99"/>
        <end position="102"/>
    </location>
</feature>
<feature type="strand" evidence="7">
    <location>
        <begin position="105"/>
        <end position="112"/>
    </location>
</feature>
<feature type="helix" evidence="7">
    <location>
        <begin position="116"/>
        <end position="121"/>
    </location>
</feature>
<feature type="strand" evidence="7">
    <location>
        <begin position="125"/>
        <end position="131"/>
    </location>
</feature>
<feature type="helix" evidence="7">
    <location>
        <begin position="133"/>
        <end position="135"/>
    </location>
</feature>
<feature type="helix" evidence="7">
    <location>
        <begin position="139"/>
        <end position="150"/>
    </location>
</feature>
<feature type="helix" evidence="7">
    <location>
        <begin position="157"/>
        <end position="169"/>
    </location>
</feature>
<feature type="helix" evidence="7">
    <location>
        <begin position="174"/>
        <end position="188"/>
    </location>
</feature>
<feature type="helix" evidence="7">
    <location>
        <begin position="198"/>
        <end position="207"/>
    </location>
</feature>
<feature type="helix" evidence="7">
    <location>
        <begin position="209"/>
        <end position="215"/>
    </location>
</feature>
<feature type="strand" evidence="7">
    <location>
        <begin position="216"/>
        <end position="219"/>
    </location>
</feature>
<feature type="strand" evidence="7">
    <location>
        <begin position="223"/>
        <end position="228"/>
    </location>
</feature>
<feature type="helix" evidence="7">
    <location>
        <begin position="232"/>
        <end position="238"/>
    </location>
</feature>
<feature type="helix" evidence="7">
    <location>
        <begin position="240"/>
        <end position="242"/>
    </location>
</feature>
<feature type="strand" evidence="7">
    <location>
        <begin position="251"/>
        <end position="253"/>
    </location>
</feature>
<feature type="strand" evidence="7">
    <location>
        <begin position="260"/>
        <end position="276"/>
    </location>
</feature>
<feature type="strand" evidence="7">
    <location>
        <begin position="279"/>
        <end position="294"/>
    </location>
</feature>
<feature type="helix" evidence="7">
    <location>
        <begin position="300"/>
        <end position="310"/>
    </location>
</feature>
<feature type="helix" evidence="7">
    <location>
        <begin position="323"/>
        <end position="329"/>
    </location>
</feature>
<feature type="helix" evidence="7">
    <location>
        <begin position="330"/>
        <end position="332"/>
    </location>
</feature>
<feature type="helix" evidence="7">
    <location>
        <begin position="337"/>
        <end position="342"/>
    </location>
</feature>
<feature type="strand" evidence="7">
    <location>
        <begin position="348"/>
        <end position="352"/>
    </location>
</feature>
<feature type="helix" evidence="7">
    <location>
        <begin position="354"/>
        <end position="358"/>
    </location>
</feature>
<feature type="helix" evidence="7">
    <location>
        <begin position="360"/>
        <end position="362"/>
    </location>
</feature>
<feature type="helix" evidence="7">
    <location>
        <begin position="369"/>
        <end position="374"/>
    </location>
</feature>
<feature type="strand" evidence="7">
    <location>
        <begin position="377"/>
        <end position="382"/>
    </location>
</feature>
<feature type="helix" evidence="7">
    <location>
        <begin position="415"/>
        <end position="422"/>
    </location>
</feature>
<feature type="helix" evidence="7">
    <location>
        <begin position="429"/>
        <end position="444"/>
    </location>
</feature>
<evidence type="ECO:0000250" key="1">
    <source>
        <dbReference type="UniProtKB" id="Q88CC1"/>
    </source>
</evidence>
<evidence type="ECO:0000303" key="2">
    <source ref="2"/>
</evidence>
<evidence type="ECO:0000305" key="3"/>
<evidence type="ECO:0000305" key="4">
    <source ref="2"/>
</evidence>
<evidence type="ECO:0000312" key="5">
    <source>
        <dbReference type="EMBL" id="AAN43356.1"/>
    </source>
</evidence>
<evidence type="ECO:0007744" key="6">
    <source>
        <dbReference type="PDB" id="2RJB"/>
    </source>
</evidence>
<evidence type="ECO:0007829" key="7">
    <source>
        <dbReference type="PDB" id="2RJB"/>
    </source>
</evidence>
<accession>A0A0H2UZX2</accession>
<accession>A0A2G3EIA4</accession>
<accession>Q7C1S9</accession>
<accession>Q83KU0</accession>
<dbReference type="EC" id="1.13.11.93" evidence="1"/>
<dbReference type="EMBL" id="AE005674">
    <property type="protein sequence ID" value="AAN43356.1"/>
    <property type="molecule type" value="Genomic_DNA"/>
</dbReference>
<dbReference type="RefSeq" id="NP_707649.1">
    <property type="nucleotide sequence ID" value="NC_004337.2"/>
</dbReference>
<dbReference type="RefSeq" id="WP_000013771.1">
    <property type="nucleotide sequence ID" value="NZ_WPGW01000106.1"/>
</dbReference>
<dbReference type="PDB" id="2RJB">
    <property type="method" value="X-ray"/>
    <property type="resolution" value="2.60 A"/>
    <property type="chains" value="A/B/C/D=1-447"/>
</dbReference>
<dbReference type="PDBsum" id="2RJB"/>
<dbReference type="SMR" id="A0A0H2UZX2"/>
<dbReference type="PaxDb" id="198214-SF1787"/>
<dbReference type="GeneID" id="1026467"/>
<dbReference type="KEGG" id="sfl:SF1787"/>
<dbReference type="PATRIC" id="fig|198214.7.peg.2120"/>
<dbReference type="OMA" id="MYRAEVP"/>
<dbReference type="EvolutionaryTrace" id="A0A0H2UZX2"/>
<dbReference type="Proteomes" id="UP000001006">
    <property type="component" value="Chromosome"/>
</dbReference>
<dbReference type="GO" id="GO:0051213">
    <property type="term" value="F:dioxygenase activity"/>
    <property type="evidence" value="ECO:0007669"/>
    <property type="project" value="UniProtKB-KW"/>
</dbReference>
<dbReference type="GO" id="GO:0046872">
    <property type="term" value="F:metal ion binding"/>
    <property type="evidence" value="ECO:0007669"/>
    <property type="project" value="UniProtKB-KW"/>
</dbReference>
<dbReference type="CDD" id="cd16348">
    <property type="entry name" value="VOC_YdcJ_like"/>
    <property type="match status" value="1"/>
</dbReference>
<dbReference type="Gene3D" id="3.10.180.80">
    <property type="entry name" value="Uncharacterised protein PF07063, DUF1338"/>
    <property type="match status" value="1"/>
</dbReference>
<dbReference type="InterPro" id="IPR009770">
    <property type="entry name" value="HGLS"/>
</dbReference>
<dbReference type="InterPro" id="IPR047869">
    <property type="entry name" value="YdcJ_bac-like"/>
</dbReference>
<dbReference type="PANTHER" id="PTHR39479">
    <property type="match status" value="1"/>
</dbReference>
<dbReference type="PANTHER" id="PTHR39479:SF2">
    <property type="entry name" value="2-OXOADIPATE DIOXYGENASE_DECARBOXYLASE"/>
    <property type="match status" value="1"/>
</dbReference>
<dbReference type="Pfam" id="PF07063">
    <property type="entry name" value="HGLS"/>
    <property type="match status" value="1"/>
</dbReference>
<dbReference type="SMART" id="SM01150">
    <property type="entry name" value="DUF1338"/>
    <property type="match status" value="1"/>
</dbReference>